<organism>
    <name type="scientific">Penicillium thymicola</name>
    <dbReference type="NCBI Taxonomy" id="293382"/>
    <lineage>
        <taxon>Eukaryota</taxon>
        <taxon>Fungi</taxon>
        <taxon>Dikarya</taxon>
        <taxon>Ascomycota</taxon>
        <taxon>Pezizomycotina</taxon>
        <taxon>Eurotiomycetes</taxon>
        <taxon>Eurotiomycetidae</taxon>
        <taxon>Eurotiales</taxon>
        <taxon>Aspergillaceae</taxon>
        <taxon>Penicillium</taxon>
    </lineage>
</organism>
<keyword id="KW-0186">Copper</keyword>
<keyword id="KW-0456">Lyase</keyword>
<keyword id="KW-0479">Metal-binding</keyword>
<gene>
    <name evidence="6" type="primary">penF</name>
</gene>
<name>PENF_PENTH</name>
<feature type="chain" id="PRO_0000455375" description="Quinolone epoxide rearrangement protein penF">
    <location>
        <begin position="1"/>
        <end position="362"/>
    </location>
</feature>
<feature type="active site" evidence="5">
    <location>
        <position position="220"/>
    </location>
</feature>
<feature type="active site" description="Broensted acid" evidence="5">
    <location>
        <position position="222"/>
    </location>
</feature>
<feature type="mutagenesis site" description="Completely abolishes the activity." evidence="5">
    <original>H</original>
    <variation>A</variation>
    <location>
        <position position="220"/>
    </location>
</feature>
<feature type="mutagenesis site" description="Greatly decreases the activity toward dienyl epoxide and results in only trace amounts of product." evidence="5">
    <original>E</original>
    <variation>A</variation>
    <variation>D</variation>
    <location>
        <position position="222"/>
    </location>
</feature>
<proteinExistence type="evidence at protein level"/>
<evidence type="ECO:0000250" key="1">
    <source>
        <dbReference type="UniProtKB" id="C8VJQ3"/>
    </source>
</evidence>
<evidence type="ECO:0000250" key="2">
    <source>
        <dbReference type="UniProtKB" id="Q5AR53"/>
    </source>
</evidence>
<evidence type="ECO:0000250" key="3">
    <source>
        <dbReference type="UniProtKB" id="Q5AR54"/>
    </source>
</evidence>
<evidence type="ECO:0000269" key="4">
    <source>
    </source>
</evidence>
<evidence type="ECO:0000269" key="5">
    <source>
    </source>
</evidence>
<evidence type="ECO:0000303" key="6">
    <source>
    </source>
</evidence>
<evidence type="ECO:0000305" key="7"/>
<evidence type="ECO:0000305" key="8">
    <source>
    </source>
</evidence>
<dbReference type="EC" id="4.2.1.-" evidence="5"/>
<dbReference type="EMBL" id="KX528209">
    <property type="protein sequence ID" value="ANY57884.1"/>
    <property type="molecule type" value="Genomic_DNA"/>
</dbReference>
<dbReference type="SMR" id="A0A1B2CTB3"/>
<dbReference type="BioCyc" id="MetaCyc:MONOMER-124184"/>
<dbReference type="GO" id="GO:0016829">
    <property type="term" value="F:lyase activity"/>
    <property type="evidence" value="ECO:0007669"/>
    <property type="project" value="UniProtKB-KW"/>
</dbReference>
<dbReference type="GO" id="GO:0046872">
    <property type="term" value="F:metal ion binding"/>
    <property type="evidence" value="ECO:0007669"/>
    <property type="project" value="UniProtKB-KW"/>
</dbReference>
<dbReference type="Pfam" id="PF24137">
    <property type="entry name" value="DA_N"/>
    <property type="match status" value="1"/>
</dbReference>
<dbReference type="SUPFAM" id="SSF159245">
    <property type="entry name" value="AttH-like"/>
    <property type="match status" value="1"/>
</dbReference>
<comment type="function">
    <text evidence="1 2 3 4 5 8">Quinolone epoxide rearrangement protein; part of the gene cluster that mediates the biosynthesis of penigequinolones, potent insecticidal alkaloids that contain a highly modified 10-carbon prenyl group (PubMed:25859931). The first stage is catalyzed by the nonribosomal peptide synthetase penN that condenses anthranilic acid and O-methyl-L-tyrosine to produce 4'-methoxycyclopeptin (By similarity). 4'-methoxycyclopeptin is then converted to 4'-methoxydehydrocyclopeptin by the ketoglutarate-dependent dioxygenase penM through dehydrogenation to form a double bond between C-alpha and C-beta of the O-methyltyrosine side chain (By similarity). PenM also converts its first product methoxydehydrocyclopeptin to 4'-methoxycyclopenin (By similarity). The following conversion of 4'methoxycyclopenin into 4'-methoxyviridicatin is catalyzed by the cyclopenase penL (By similarity). 4'-methoxyviridicatin is the precursor of quinolone natural products, and is further converted to quinolinone B (Probable). The prenyltransferase penI then catalyzes the canonical Friedel-Crafts alkylation of quinolinone B with dimethylallyl cation to yield dimethylallyl quinolone, which is subjected to FAD-dependent dehydrogenation by the FAD-linked oxidoreductase penH to yield conjugated aryl diene (PubMed:25859931). The delta(3') double bond then serves as the site of the second alkylation with DMAPP catalyzed by the prenyltransferase penG to yield a carbenium ion intermediate, which can be attacked by H(2)O to yield a styrenyl quinolone containing a C3'-hydroxyprenyl chain, or undergo cyclization to yield yaequinolones J1 and J2 (PubMed:25859931). The conversion of the styrenyl quinolone into the tetrahydrofuran-containing yaequinolone C is performed by the FAD-dependent monooxygenase penE and involves epoxidation of the terminal C7'-C8' olefin, followed by epoxide ring opening initiated by the C3' hydroxyl group (PubMed:25859931). The predicted cysteine hydrolase penJ acts as an epoxide hydrolase that enhances the rate of the 5-exo-tet cyclization step, increasing the yield of yaequinolone C (PubMed:25859931, PubMed:28114276). PenF catalyzes the cationic rearrangement of the epoxide formed by penE (before ring opening to produce yaequinolone C) into yaequinolone D (PubMed:28114276). Finally, the short-chain dehydrogenase/reductase (SDR)-like reductase penD, catalyzes both the dehydration of yaequinolone D and the reduction of the resulting oxonium to yield penigequinolone (PubMed:28114276).</text>
</comment>
<comment type="catalytic activity">
    <reaction evidence="5">
        <text>[(1'E)-5'-(3',3'-dimethyloxiran-2'-yl)-3'-hydroxy-3'-methylpent-1'-en-1'-yl]-quinolinone B = yaequinolone D</text>
        <dbReference type="Rhea" id="RHEA:74491"/>
        <dbReference type="ChEBI" id="CHEBI:193079"/>
        <dbReference type="ChEBI" id="CHEBI:193558"/>
    </reaction>
    <physiologicalReaction direction="left-to-right" evidence="5">
        <dbReference type="Rhea" id="RHEA:74492"/>
    </physiologicalReaction>
</comment>
<comment type="pathway">
    <text evidence="5">Secondary metabolite biosynthesis.</text>
</comment>
<comment type="pathway">
    <text evidence="5">Alkaloid biosynthesis.</text>
</comment>
<comment type="pathway">
    <text evidence="5">Mycotoxin biosynthesis.</text>
</comment>
<comment type="disruption phenotype">
    <text evidence="5">Abolishes the production of penigequinolone and accumulates the epoxide formed by penE.</text>
</comment>
<comment type="similarity">
    <text evidence="7">Belongs to the quinolone epoxide rearrangement protein penF family.</text>
</comment>
<reference key="1">
    <citation type="journal article" date="2015" name="J. Am. Chem. Soc.">
        <title>Tandem prenyltransferases catalyze isoprenoid elongation and complexity generation in biosynthesis of quinolone alkaloids.</title>
        <authorList>
            <person name="Zou Y."/>
            <person name="Zhan Z."/>
            <person name="Li D."/>
            <person name="Tang M."/>
            <person name="Cacho R.A."/>
            <person name="Watanabe K."/>
            <person name="Tang Y."/>
        </authorList>
    </citation>
    <scope>NUCLEOTIDE SEQUENCE [GENOMIC DNA]</scope>
    <scope>FUNCTION</scope>
    <scope>PATHWAY</scope>
    <source>
        <strain>IBT 5891 / CBS 111225</strain>
    </source>
</reference>
<reference key="2">
    <citation type="journal article" date="2017" name="Nat. Chem. Biol.">
        <title>Enzyme-catalyzed cationic epoxide rearrangements in quinolone alkaloid biosynthesis.</title>
        <authorList>
            <person name="Zou Y."/>
            <person name="Garcia-Borras M."/>
            <person name="Tang M.C."/>
            <person name="Hirayama Y."/>
            <person name="Li D.H."/>
            <person name="Li L."/>
            <person name="Watanabe K."/>
            <person name="Houk K.N."/>
            <person name="Tang Y."/>
        </authorList>
    </citation>
    <scope>FUNCTION</scope>
    <scope>DISRUPTION PHENOTYPE</scope>
    <scope>CATALYTIC ACTIVITY</scope>
    <scope>ACTIVE SITE</scope>
    <scope>MUTAGENESIS OF HIS-220 AND GLU-222</scope>
</reference>
<accession>A0A1B2CTB3</accession>
<protein>
    <recommendedName>
        <fullName evidence="6">Quinolone epoxide rearrangement protein penF</fullName>
        <ecNumber evidence="5">4.2.1.-</ecNumber>
    </recommendedName>
    <alternativeName>
        <fullName evidence="6">Penigequinolones biosynthesis cluster protein F</fullName>
    </alternativeName>
</protein>
<sequence length="362" mass="38936">MFDGARLAQGLPYYISQVVFYPFEIYNSMSIVDVISRQDELDSPKAKPHVNATVFDSWWFDAVSNNLTKESITVVFYNAGPESIGAPDLGGPLFVEISGTFDNGTKFTIGSTAPEGAVIESGTQGIRGDWMGSGCSFTGSDLHRPSPEYTVSIDNAGLGVFGKLTLQSVSPPHFAGGSNKPGVSPELIPNIYAAFAQPDAAAVVDFTINGKTLKFNGVGHHEKNWGTAALEASVKAWYWGHGRVGPYSLVWFDGVTPGGKEYFASLITENGKIVSQSCEPNSVVVRPWGENDEFPPVRGAAAPAGYTLRYALGHGMAFVANFTREVSQVEADTYKRMIGSFSGGMEGGEQYEGRALCDQFQF</sequence>